<dbReference type="EMBL" id="CP001283">
    <property type="protein sequence ID" value="ACK91418.1"/>
    <property type="molecule type" value="Genomic_DNA"/>
</dbReference>
<dbReference type="RefSeq" id="WP_000966134.1">
    <property type="nucleotide sequence ID" value="NC_011773.1"/>
</dbReference>
<dbReference type="SMR" id="B7JDY2"/>
<dbReference type="KEGG" id="bcu:BCAH820_1258"/>
<dbReference type="HOGENOM" id="CLU_1101152_0_0_9"/>
<dbReference type="Proteomes" id="UP000001363">
    <property type="component" value="Chromosome"/>
</dbReference>
<dbReference type="HAMAP" id="MF_01860">
    <property type="entry name" value="UPF0736"/>
    <property type="match status" value="1"/>
</dbReference>
<dbReference type="InterPro" id="IPR020909">
    <property type="entry name" value="UPF0736"/>
</dbReference>
<dbReference type="Pfam" id="PF12227">
    <property type="entry name" value="DUF3603"/>
    <property type="match status" value="1"/>
</dbReference>
<proteinExistence type="inferred from homology"/>
<gene>
    <name type="ordered locus">BCAH820_1258</name>
</gene>
<sequence length="248" mass="30052">MLYLHDVWVNWFEGEENGYNVCHFYEWRKDDTIELLDQVPLLKVDSTLYHYIENELLELPQKLLEDVHHKAYIRKNHERLQQEYCFVVTDGKGIIAIDTIGYNVPIRKSRLIPRQEQMVYEMVENVQAEKYEFQVEEMEKEHHILSPSPFVMNGLTRKERQLKQLLFMALDQLHTTKNTAEIRYWFTEWDPSAYGMVQHMEFEDIWAKLYDEAKTGWSEKHEQLCERLVKGQPFFEKLWEMENEQKVN</sequence>
<reference key="1">
    <citation type="submission" date="2008-10" db="EMBL/GenBank/DDBJ databases">
        <title>Genome sequence of Bacillus cereus AH820.</title>
        <authorList>
            <person name="Dodson R.J."/>
            <person name="Durkin A.S."/>
            <person name="Rosovitz M.J."/>
            <person name="Rasko D.A."/>
            <person name="Hoffmaster A."/>
            <person name="Ravel J."/>
            <person name="Sutton G."/>
        </authorList>
    </citation>
    <scope>NUCLEOTIDE SEQUENCE [LARGE SCALE GENOMIC DNA]</scope>
    <source>
        <strain>AH820</strain>
    </source>
</reference>
<feature type="chain" id="PRO_0000369137" description="UPF0736 protein BCAH820_1258">
    <location>
        <begin position="1"/>
        <end position="248"/>
    </location>
</feature>
<evidence type="ECO:0000255" key="1">
    <source>
        <dbReference type="HAMAP-Rule" id="MF_01860"/>
    </source>
</evidence>
<name>Y1258_BACC0</name>
<comment type="similarity">
    <text evidence="1">Belongs to the UPF0736 family.</text>
</comment>
<accession>B7JDY2</accession>
<protein>
    <recommendedName>
        <fullName evidence="1">UPF0736 protein BCAH820_1258</fullName>
    </recommendedName>
</protein>
<organism>
    <name type="scientific">Bacillus cereus (strain AH820)</name>
    <dbReference type="NCBI Taxonomy" id="405535"/>
    <lineage>
        <taxon>Bacteria</taxon>
        <taxon>Bacillati</taxon>
        <taxon>Bacillota</taxon>
        <taxon>Bacilli</taxon>
        <taxon>Bacillales</taxon>
        <taxon>Bacillaceae</taxon>
        <taxon>Bacillus</taxon>
        <taxon>Bacillus cereus group</taxon>
    </lineage>
</organism>